<sequence>MPKIVVVGAVAGGATCASQIRRLDKESDIIIFEKDRDMSFANCALPYVIGEVVEDRKYALAYTPEKFYDRKQITVKTYHEVIAINDERQTVSVLNRKTNEQFEESYDKLILSPGASANSLGFESDITFTLRNLEDTDAIEQFIKANQVDKVLVVGAGYVSLEVLENLYKRGLHPTLIHRSDKINKLMDADMNQPILDELDKREIPYRLNEEIVAINGNEITFKSGRVEHYDMIIEGVGTHPNSKFIESSNIKLDRKGFIPVNDKLETNVPNIYAIGDIATSHYRHVDLPASVPLAWGAHRAASIVAEQIAGNDTIEFKGFLGNNIVKFFDYTFASVGVKPNELKQFDYKMVEVTQGAHANYYPGNSPLHLRVYYDTSNRQILRAAAVGKEGVDKRIDVLSMAMMNQLTVDELTEFEVAYAPPYSHPKDLINMIGYKAK</sequence>
<keyword id="KW-0274">FAD</keyword>
<keyword id="KW-0285">Flavoprotein</keyword>
<keyword id="KW-0521">NADP</keyword>
<keyword id="KW-0560">Oxidoreductase</keyword>
<keyword id="KW-0676">Redox-active center</keyword>
<name>CDR_STAAB</name>
<organism>
    <name type="scientific">Staphylococcus aureus (strain bovine RF122 / ET3-1)</name>
    <dbReference type="NCBI Taxonomy" id="273036"/>
    <lineage>
        <taxon>Bacteria</taxon>
        <taxon>Bacillati</taxon>
        <taxon>Bacillota</taxon>
        <taxon>Bacilli</taxon>
        <taxon>Bacillales</taxon>
        <taxon>Staphylococcaceae</taxon>
        <taxon>Staphylococcus</taxon>
    </lineage>
</organism>
<gene>
    <name evidence="1" type="primary">cdr</name>
    <name type="ordered locus">SAB0839c</name>
</gene>
<accession>Q2YWW1</accession>
<dbReference type="EC" id="1.8.1.14" evidence="1"/>
<dbReference type="EMBL" id="AJ938182">
    <property type="protein sequence ID" value="CAI80527.1"/>
    <property type="molecule type" value="Genomic_DNA"/>
</dbReference>
<dbReference type="RefSeq" id="WP_001124505.1">
    <property type="nucleotide sequence ID" value="NC_007622.1"/>
</dbReference>
<dbReference type="SMR" id="Q2YWW1"/>
<dbReference type="KEGG" id="sab:SAB0839c"/>
<dbReference type="HOGENOM" id="CLU_003291_1_3_9"/>
<dbReference type="GO" id="GO:0050451">
    <property type="term" value="F:CoA-disulfide reductase (NADPH) activity"/>
    <property type="evidence" value="ECO:0007669"/>
    <property type="project" value="UniProtKB-UniRule"/>
</dbReference>
<dbReference type="GO" id="GO:0050660">
    <property type="term" value="F:flavin adenine dinucleotide binding"/>
    <property type="evidence" value="ECO:0007669"/>
    <property type="project" value="UniProtKB-UniRule"/>
</dbReference>
<dbReference type="GO" id="GO:0050661">
    <property type="term" value="F:NADP binding"/>
    <property type="evidence" value="ECO:0007669"/>
    <property type="project" value="UniProtKB-UniRule"/>
</dbReference>
<dbReference type="GO" id="GO:0003756">
    <property type="term" value="F:protein disulfide isomerase activity"/>
    <property type="evidence" value="ECO:0007669"/>
    <property type="project" value="UniProtKB-UniRule"/>
</dbReference>
<dbReference type="Gene3D" id="3.30.390.30">
    <property type="match status" value="1"/>
</dbReference>
<dbReference type="Gene3D" id="3.50.50.60">
    <property type="entry name" value="FAD/NAD(P)-binding domain"/>
    <property type="match status" value="2"/>
</dbReference>
<dbReference type="HAMAP" id="MF_01608">
    <property type="entry name" value="CoA_diS_reduct"/>
    <property type="match status" value="1"/>
</dbReference>
<dbReference type="InterPro" id="IPR017758">
    <property type="entry name" value="CoA_disulphide_reductase"/>
</dbReference>
<dbReference type="InterPro" id="IPR023536">
    <property type="entry name" value="CoA_disulphide_reductase_staph"/>
</dbReference>
<dbReference type="InterPro" id="IPR050260">
    <property type="entry name" value="FAD-bd_OxRdtase"/>
</dbReference>
<dbReference type="InterPro" id="IPR036188">
    <property type="entry name" value="FAD/NAD-bd_sf"/>
</dbReference>
<dbReference type="InterPro" id="IPR023753">
    <property type="entry name" value="FAD/NAD-binding_dom"/>
</dbReference>
<dbReference type="InterPro" id="IPR016156">
    <property type="entry name" value="FAD/NAD-linked_Rdtase_dimer_sf"/>
</dbReference>
<dbReference type="InterPro" id="IPR004099">
    <property type="entry name" value="Pyr_nucl-diS_OxRdtase_dimer"/>
</dbReference>
<dbReference type="NCBIfam" id="TIGR03385">
    <property type="entry name" value="CoA_CoA_reduc"/>
    <property type="match status" value="1"/>
</dbReference>
<dbReference type="NCBIfam" id="NF010037">
    <property type="entry name" value="PRK13512.1"/>
    <property type="match status" value="1"/>
</dbReference>
<dbReference type="PANTHER" id="PTHR43429:SF1">
    <property type="entry name" value="NAD(P)H SULFUR OXIDOREDUCTASE (COA-DEPENDENT)"/>
    <property type="match status" value="1"/>
</dbReference>
<dbReference type="PANTHER" id="PTHR43429">
    <property type="entry name" value="PYRIDINE NUCLEOTIDE-DISULFIDE OXIDOREDUCTASE DOMAIN-CONTAINING"/>
    <property type="match status" value="1"/>
</dbReference>
<dbReference type="Pfam" id="PF07992">
    <property type="entry name" value="Pyr_redox_2"/>
    <property type="match status" value="1"/>
</dbReference>
<dbReference type="Pfam" id="PF02852">
    <property type="entry name" value="Pyr_redox_dim"/>
    <property type="match status" value="1"/>
</dbReference>
<dbReference type="PRINTS" id="PR00368">
    <property type="entry name" value="FADPNR"/>
</dbReference>
<dbReference type="PRINTS" id="PR00411">
    <property type="entry name" value="PNDRDTASEI"/>
</dbReference>
<dbReference type="SUPFAM" id="SSF51905">
    <property type="entry name" value="FAD/NAD(P)-binding domain"/>
    <property type="match status" value="1"/>
</dbReference>
<dbReference type="SUPFAM" id="SSF55424">
    <property type="entry name" value="FAD/NAD-linked reductases, dimerisation (C-terminal) domain"/>
    <property type="match status" value="1"/>
</dbReference>
<proteinExistence type="inferred from homology"/>
<evidence type="ECO:0000255" key="1">
    <source>
        <dbReference type="HAMAP-Rule" id="MF_01608"/>
    </source>
</evidence>
<comment type="function">
    <text evidence="1">Catalyzes specifically the NADPH-dependent reduction of coenzyme A disulfide.</text>
</comment>
<comment type="catalytic activity">
    <reaction evidence="1">
        <text>NADP(+) + 2 CoA = CoA-disulfide + NADPH + H(+)</text>
        <dbReference type="Rhea" id="RHEA:14705"/>
        <dbReference type="ChEBI" id="CHEBI:15378"/>
        <dbReference type="ChEBI" id="CHEBI:57287"/>
        <dbReference type="ChEBI" id="CHEBI:57783"/>
        <dbReference type="ChEBI" id="CHEBI:58349"/>
        <dbReference type="ChEBI" id="CHEBI:62209"/>
        <dbReference type="EC" id="1.8.1.14"/>
    </reaction>
</comment>
<comment type="cofactor">
    <cofactor evidence="1">
        <name>FAD</name>
        <dbReference type="ChEBI" id="CHEBI:57692"/>
    </cofactor>
    <text evidence="1">Binds 1 FAD per subunit.</text>
</comment>
<comment type="subunit">
    <text evidence="1">Homodimer.</text>
</comment>
<comment type="domain">
    <text evidence="1">Contains 2 FAD binding domains and a single NADPH binding domain.</text>
</comment>
<comment type="miscellaneous">
    <text evidence="1">Reduction of disulfides occurs by a thiol-disulfide exchange reaction, but involves only a single catalytic cysteine residue that forms a stable mixed disulfide with CoA during catalysis.</text>
</comment>
<comment type="similarity">
    <text evidence="1">Belongs to the class-III pyridine nucleotide-disulfide oxidoreductase family.</text>
</comment>
<protein>
    <recommendedName>
        <fullName evidence="1">Coenzyme A disulfide reductase</fullName>
        <shortName evidence="1">CoA-disulfide reductase</shortName>
        <shortName evidence="1">CoADR</shortName>
        <ecNumber evidence="1">1.8.1.14</ecNumber>
    </recommendedName>
</protein>
<feature type="chain" id="PRO_0000289960" description="Coenzyme A disulfide reductase">
    <location>
        <begin position="1"/>
        <end position="438"/>
    </location>
</feature>
<feature type="active site" description="Nucleophile" evidence="1">
    <location>
        <position position="43"/>
    </location>
</feature>
<feature type="active site" description="Redox-active" evidence="1">
    <location>
        <position position="43"/>
    </location>
</feature>
<feature type="binding site" evidence="1">
    <location>
        <begin position="8"/>
        <end position="33"/>
    </location>
    <ligand>
        <name>FAD</name>
        <dbReference type="ChEBI" id="CHEBI:57692"/>
    </ligand>
</feature>
<feature type="binding site" evidence="1">
    <location>
        <position position="15"/>
    </location>
    <ligand>
        <name>substrate</name>
    </ligand>
</feature>
<feature type="binding site" evidence="1">
    <location>
        <position position="19"/>
    </location>
    <ligand>
        <name>substrate</name>
    </ligand>
</feature>
<feature type="binding site" evidence="1">
    <location>
        <position position="22"/>
    </location>
    <ligand>
        <name>substrate</name>
    </ligand>
</feature>
<feature type="binding site" evidence="1">
    <location>
        <position position="39"/>
    </location>
    <ligand>
        <name>substrate</name>
    </ligand>
</feature>
<feature type="binding site" evidence="1">
    <location>
        <position position="42"/>
    </location>
    <ligand>
        <name>substrate</name>
    </ligand>
</feature>
<feature type="binding site" evidence="1">
    <location>
        <position position="71"/>
    </location>
    <ligand>
        <name>substrate</name>
    </ligand>
</feature>
<feature type="binding site" evidence="1">
    <location>
        <begin position="151"/>
        <end position="166"/>
    </location>
    <ligand>
        <name>NADP(+)</name>
        <dbReference type="ChEBI" id="CHEBI:58349"/>
    </ligand>
</feature>
<feature type="binding site" evidence="1">
    <location>
        <begin position="267"/>
        <end position="277"/>
    </location>
    <ligand>
        <name>FAD</name>
        <dbReference type="ChEBI" id="CHEBI:57692"/>
    </ligand>
</feature>
<feature type="binding site" evidence="1">
    <location>
        <position position="299"/>
    </location>
    <ligand>
        <name>substrate</name>
    </ligand>
</feature>
<feature type="binding site" evidence="1">
    <location>
        <position position="419"/>
    </location>
    <ligand>
        <name>FAD</name>
        <dbReference type="ChEBI" id="CHEBI:57692"/>
    </ligand>
</feature>
<feature type="binding site" evidence="1">
    <location>
        <position position="427"/>
    </location>
    <ligand>
        <name>substrate</name>
    </ligand>
</feature>
<reference key="1">
    <citation type="journal article" date="2007" name="PLoS ONE">
        <title>Molecular correlates of host specialization in Staphylococcus aureus.</title>
        <authorList>
            <person name="Herron-Olson L."/>
            <person name="Fitzgerald J.R."/>
            <person name="Musser J.M."/>
            <person name="Kapur V."/>
        </authorList>
    </citation>
    <scope>NUCLEOTIDE SEQUENCE [LARGE SCALE GENOMIC DNA]</scope>
    <source>
        <strain>bovine RF122 / ET3-1</strain>
    </source>
</reference>